<comment type="function">
    <text evidence="1">Involved in degradation of small peptides.</text>
</comment>
<comment type="catalytic activity">
    <reaction evidence="1">
        <text>Release of a C-terminal amino acid with broad specificity.</text>
        <dbReference type="EC" id="3.4.16.5"/>
    </reaction>
</comment>
<comment type="subcellular location">
    <subcellularLocation>
        <location evidence="6">Secreted</location>
    </subcellularLocation>
</comment>
<comment type="similarity">
    <text evidence="6">Belongs to the peptidase S10 family.</text>
</comment>
<comment type="sequence caution" evidence="6">
    <conflict type="erroneous gene model prediction">
        <sequence resource="EMBL-CDS" id="EFE34210"/>
    </conflict>
</comment>
<dbReference type="EC" id="3.4.16.5" evidence="1"/>
<dbReference type="EMBL" id="ABSU01000007">
    <property type="protein sequence ID" value="EFE34210.1"/>
    <property type="status" value="ALT_SEQ"/>
    <property type="molecule type" value="Genomic_DNA"/>
</dbReference>
<dbReference type="RefSeq" id="XP_003014599.1">
    <property type="nucleotide sequence ID" value="XM_003014553.1"/>
</dbReference>
<dbReference type="SMR" id="D4ASE6"/>
<dbReference type="ESTHER" id="artbc-scpf">
    <property type="family name" value="Carboxypeptidase_S10"/>
</dbReference>
<dbReference type="MEROPS" id="S10.001"/>
<dbReference type="GeneID" id="9520651"/>
<dbReference type="KEGG" id="abe:ARB_07161"/>
<dbReference type="eggNOG" id="KOG1282">
    <property type="taxonomic scope" value="Eukaryota"/>
</dbReference>
<dbReference type="HOGENOM" id="CLU_008523_10_4_1"/>
<dbReference type="OrthoDB" id="443318at2759"/>
<dbReference type="Proteomes" id="UP000008866">
    <property type="component" value="Unassembled WGS sequence"/>
</dbReference>
<dbReference type="GO" id="GO:0005576">
    <property type="term" value="C:extracellular region"/>
    <property type="evidence" value="ECO:0007669"/>
    <property type="project" value="UniProtKB-SubCell"/>
</dbReference>
<dbReference type="GO" id="GO:0000324">
    <property type="term" value="C:fungal-type vacuole"/>
    <property type="evidence" value="ECO:0007669"/>
    <property type="project" value="TreeGrafter"/>
</dbReference>
<dbReference type="GO" id="GO:0004185">
    <property type="term" value="F:serine-type carboxypeptidase activity"/>
    <property type="evidence" value="ECO:0007669"/>
    <property type="project" value="UniProtKB-EC"/>
</dbReference>
<dbReference type="GO" id="GO:0006508">
    <property type="term" value="P:proteolysis"/>
    <property type="evidence" value="ECO:0007669"/>
    <property type="project" value="UniProtKB-KW"/>
</dbReference>
<dbReference type="Gene3D" id="1.10.287.410">
    <property type="match status" value="1"/>
</dbReference>
<dbReference type="Gene3D" id="3.40.50.12670">
    <property type="match status" value="1"/>
</dbReference>
<dbReference type="Gene3D" id="3.40.50.1820">
    <property type="entry name" value="alpha/beta hydrolase"/>
    <property type="match status" value="1"/>
</dbReference>
<dbReference type="InterPro" id="IPR029058">
    <property type="entry name" value="AB_hydrolase_fold"/>
</dbReference>
<dbReference type="InterPro" id="IPR001563">
    <property type="entry name" value="Peptidase_S10"/>
</dbReference>
<dbReference type="InterPro" id="IPR018202">
    <property type="entry name" value="Ser_caboxypep_ser_AS"/>
</dbReference>
<dbReference type="PANTHER" id="PTHR11802:SF113">
    <property type="entry name" value="SERINE CARBOXYPEPTIDASE CTSA-4.1"/>
    <property type="match status" value="1"/>
</dbReference>
<dbReference type="PANTHER" id="PTHR11802">
    <property type="entry name" value="SERINE PROTEASE FAMILY S10 SERINE CARBOXYPEPTIDASE"/>
    <property type="match status" value="1"/>
</dbReference>
<dbReference type="Pfam" id="PF00450">
    <property type="entry name" value="Peptidase_S10"/>
    <property type="match status" value="2"/>
</dbReference>
<dbReference type="PRINTS" id="PR00724">
    <property type="entry name" value="CRBOXYPTASEC"/>
</dbReference>
<dbReference type="SUPFAM" id="SSF53474">
    <property type="entry name" value="alpha/beta-Hydrolases"/>
    <property type="match status" value="1"/>
</dbReference>
<dbReference type="PROSITE" id="PS00131">
    <property type="entry name" value="CARBOXYPEPT_SER_SER"/>
    <property type="match status" value="1"/>
</dbReference>
<evidence type="ECO:0000250" key="1">
    <source>
        <dbReference type="UniProtKB" id="P00729"/>
    </source>
</evidence>
<evidence type="ECO:0000250" key="2">
    <source>
        <dbReference type="UniProtKB" id="P08819"/>
    </source>
</evidence>
<evidence type="ECO:0000255" key="3"/>
<evidence type="ECO:0000255" key="4">
    <source>
        <dbReference type="PROSITE-ProRule" id="PRU00498"/>
    </source>
</evidence>
<evidence type="ECO:0000255" key="5">
    <source>
        <dbReference type="PROSITE-ProRule" id="PRU10074"/>
    </source>
</evidence>
<evidence type="ECO:0000305" key="6"/>
<feature type="signal peptide" evidence="3">
    <location>
        <begin position="1"/>
        <end position="17"/>
    </location>
</feature>
<feature type="chain" id="PRO_0000435281" description="Carboxypeptidase Y homolog ARB_07161">
    <location>
        <begin position="18"/>
        <end position="486"/>
    </location>
</feature>
<feature type="active site" evidence="5">
    <location>
        <position position="241"/>
    </location>
</feature>
<feature type="active site" evidence="2">
    <location>
        <position position="403"/>
    </location>
</feature>
<feature type="active site" evidence="1">
    <location>
        <position position="462"/>
    </location>
</feature>
<feature type="binding site" evidence="1">
    <location>
        <position position="406"/>
    </location>
    <ligand>
        <name>substrate</name>
    </ligand>
</feature>
<feature type="glycosylation site" description="N-linked (GlcNAc...) asparagine" evidence="4">
    <location>
        <position position="111"/>
    </location>
</feature>
<feature type="glycosylation site" description="N-linked (GlcNAc...) asparagine" evidence="4">
    <location>
        <position position="430"/>
    </location>
</feature>
<feature type="disulfide bond" evidence="1">
    <location>
        <begin position="281"/>
        <end position="305"/>
    </location>
</feature>
<feature type="disulfide bond" evidence="1">
    <location>
        <begin position="288"/>
        <end position="298"/>
    </location>
</feature>
<feature type="disulfide bond" evidence="1">
    <location>
        <begin position="327"/>
        <end position="334"/>
    </location>
</feature>
<sequence length="486" mass="54906">MKGLLSLLLVGAANALAASYEPRSLTEDMLQGKEKEVWDAIKGEIPGAQLDDYFNPPTAHQREPDEKWDGKLEGKSVNTLWVEEGKDKPSGIEEYGMRFKTVDPSSLGVDNVTQYSGYLDNKKNGQHLFFWFFESRRDPQYDPVILWLNGGPGCSSMTSLFMELGPARVGQDLKLTRNPNSWNNRASIIFLDQPVNVGFSYGKSGAFNTPSASKDVFAFLTLFFKKFPQYALQDFHIAGESYAGHYIPFASYPPMACGKGGYSAVLDQPTCKAMEAAVPQCQKEIKRCYDKPTDVATCVKGAKFCKDALVRPYSRTGQSIYDIRGRCEDPKDLCYPILGWIAKYLNQRHVQKAIGAEVSHFKGCSNHISSQFFAHGDYNQPFHRKIPGILKDVNVLVYAGDADYICNWLGVKEWTEALQWPGRHIFRRKNLSVVYHSVNKWPLGRVKYHNGLAFLQVFKAGHRVPYDQPENALDFFNRWLAGEWTP</sequence>
<accession>D4ASE6</accession>
<name>SCPF_ARTBC</name>
<reference key="1">
    <citation type="journal article" date="2011" name="Genome Biol.">
        <title>Comparative and functional genomics provide insights into the pathogenicity of dermatophytic fungi.</title>
        <authorList>
            <person name="Burmester A."/>
            <person name="Shelest E."/>
            <person name="Gloeckner G."/>
            <person name="Heddergott C."/>
            <person name="Schindler S."/>
            <person name="Staib P."/>
            <person name="Heidel A."/>
            <person name="Felder M."/>
            <person name="Petzold A."/>
            <person name="Szafranski K."/>
            <person name="Feuermann M."/>
            <person name="Pedruzzi I."/>
            <person name="Priebe S."/>
            <person name="Groth M."/>
            <person name="Winkler R."/>
            <person name="Li W."/>
            <person name="Kniemeyer O."/>
            <person name="Schroeckh V."/>
            <person name="Hertweck C."/>
            <person name="Hube B."/>
            <person name="White T.C."/>
            <person name="Platzer M."/>
            <person name="Guthke R."/>
            <person name="Heitman J."/>
            <person name="Woestemeyer J."/>
            <person name="Zipfel P.F."/>
            <person name="Monod M."/>
            <person name="Brakhage A.A."/>
        </authorList>
    </citation>
    <scope>NUCLEOTIDE SEQUENCE [LARGE SCALE GENOMIC DNA]</scope>
    <source>
        <strain>ATCC MYA-4681 / CBS 112371</strain>
    </source>
</reference>
<proteinExistence type="inferred from homology"/>
<protein>
    <recommendedName>
        <fullName evidence="6">Carboxypeptidase Y homolog ARB_07161</fullName>
        <ecNumber evidence="1">3.4.16.5</ecNumber>
    </recommendedName>
    <alternativeName>
        <fullName evidence="6">Serine carboxypeptidase ARB_07161</fullName>
    </alternativeName>
</protein>
<keyword id="KW-0121">Carboxypeptidase</keyword>
<keyword id="KW-1015">Disulfide bond</keyword>
<keyword id="KW-0325">Glycoprotein</keyword>
<keyword id="KW-0378">Hydrolase</keyword>
<keyword id="KW-0645">Protease</keyword>
<keyword id="KW-1185">Reference proteome</keyword>
<keyword id="KW-0964">Secreted</keyword>
<keyword id="KW-0732">Signal</keyword>
<gene>
    <name type="ORF">ARB_07161</name>
</gene>
<organism>
    <name type="scientific">Arthroderma benhamiae (strain ATCC MYA-4681 / CBS 112371)</name>
    <name type="common">Trichophyton mentagrophytes</name>
    <dbReference type="NCBI Taxonomy" id="663331"/>
    <lineage>
        <taxon>Eukaryota</taxon>
        <taxon>Fungi</taxon>
        <taxon>Dikarya</taxon>
        <taxon>Ascomycota</taxon>
        <taxon>Pezizomycotina</taxon>
        <taxon>Eurotiomycetes</taxon>
        <taxon>Eurotiomycetidae</taxon>
        <taxon>Onygenales</taxon>
        <taxon>Arthrodermataceae</taxon>
        <taxon>Trichophyton</taxon>
    </lineage>
</organism>